<dbReference type="EC" id="2.7.11.1" evidence="1"/>
<dbReference type="EMBL" id="AJ938182">
    <property type="protein sequence ID" value="CAI81639.1"/>
    <property type="molecule type" value="Genomic_DNA"/>
</dbReference>
<dbReference type="RefSeq" id="WP_001190825.1">
    <property type="nucleotide sequence ID" value="NC_007622.1"/>
</dbReference>
<dbReference type="SMR" id="Q2YUI8"/>
<dbReference type="KEGG" id="sab:SAB1950c"/>
<dbReference type="HOGENOM" id="CLU_090336_11_1_9"/>
<dbReference type="GO" id="GO:0005524">
    <property type="term" value="F:ATP binding"/>
    <property type="evidence" value="ECO:0007669"/>
    <property type="project" value="UniProtKB-KW"/>
</dbReference>
<dbReference type="GO" id="GO:0106310">
    <property type="term" value="F:protein serine kinase activity"/>
    <property type="evidence" value="ECO:0007669"/>
    <property type="project" value="RHEA"/>
</dbReference>
<dbReference type="GO" id="GO:0004674">
    <property type="term" value="F:protein serine/threonine kinase activity"/>
    <property type="evidence" value="ECO:0007669"/>
    <property type="project" value="UniProtKB-KW"/>
</dbReference>
<dbReference type="GO" id="GO:0016989">
    <property type="term" value="F:sigma factor antagonist activity"/>
    <property type="evidence" value="ECO:0007669"/>
    <property type="project" value="InterPro"/>
</dbReference>
<dbReference type="CDD" id="cd16936">
    <property type="entry name" value="HATPase_RsbW-like"/>
    <property type="match status" value="1"/>
</dbReference>
<dbReference type="Gene3D" id="3.30.565.10">
    <property type="entry name" value="Histidine kinase-like ATPase, C-terminal domain"/>
    <property type="match status" value="1"/>
</dbReference>
<dbReference type="HAMAP" id="MF_00638">
    <property type="entry name" value="Anti_sigma_B"/>
    <property type="match status" value="1"/>
</dbReference>
<dbReference type="InterPro" id="IPR050267">
    <property type="entry name" value="Anti-sigma-factor_SerPK"/>
</dbReference>
<dbReference type="InterPro" id="IPR036890">
    <property type="entry name" value="HATPase_C_sf"/>
</dbReference>
<dbReference type="InterPro" id="IPR010193">
    <property type="entry name" value="RsbW"/>
</dbReference>
<dbReference type="NCBIfam" id="NF003144">
    <property type="entry name" value="PRK04069.1"/>
    <property type="match status" value="1"/>
</dbReference>
<dbReference type="NCBIfam" id="TIGR01924">
    <property type="entry name" value="rsbW_low_gc"/>
    <property type="match status" value="1"/>
</dbReference>
<dbReference type="PANTHER" id="PTHR35526">
    <property type="entry name" value="ANTI-SIGMA-F FACTOR RSBW-RELATED"/>
    <property type="match status" value="1"/>
</dbReference>
<dbReference type="PANTHER" id="PTHR35526:SF9">
    <property type="entry name" value="SERINE-PROTEIN KINASE RSBW"/>
    <property type="match status" value="1"/>
</dbReference>
<dbReference type="Pfam" id="PF13581">
    <property type="entry name" value="HATPase_c_2"/>
    <property type="match status" value="1"/>
</dbReference>
<dbReference type="SUPFAM" id="SSF55874">
    <property type="entry name" value="ATPase domain of HSP90 chaperone/DNA topoisomerase II/histidine kinase"/>
    <property type="match status" value="1"/>
</dbReference>
<gene>
    <name evidence="1" type="primary">rsbW</name>
    <name type="ordered locus">SAB1950c</name>
</gene>
<sequence length="159" mass="17935">MQSKEDFIEMRVPASAEYVSLIRLTLSGVFSRAGATYDDIEDAKIAVSEAVTNAVKHAYKEKNNVGIINIYFEILEDKIKIVISDKGDSFDYETTKSKIGPYDKDENIDFLREGGLGLFLIESLMDEVTVYKESGVTISMTKYIKKEQVRNNGERVEIS</sequence>
<keyword id="KW-0067">ATP-binding</keyword>
<keyword id="KW-0418">Kinase</keyword>
<keyword id="KW-0547">Nucleotide-binding</keyword>
<keyword id="KW-0723">Serine/threonine-protein kinase</keyword>
<keyword id="KW-0808">Transferase</keyword>
<feature type="chain" id="PRO_0000301409" description="Serine-protein kinase RsbW">
    <location>
        <begin position="1"/>
        <end position="159"/>
    </location>
</feature>
<name>RSBW_STAAB</name>
<reference key="1">
    <citation type="journal article" date="2007" name="PLoS ONE">
        <title>Molecular correlates of host specialization in Staphylococcus aureus.</title>
        <authorList>
            <person name="Herron-Olson L."/>
            <person name="Fitzgerald J.R."/>
            <person name="Musser J.M."/>
            <person name="Kapur V."/>
        </authorList>
    </citation>
    <scope>NUCLEOTIDE SEQUENCE [LARGE SCALE GENOMIC DNA]</scope>
    <source>
        <strain>bovine RF122 / ET3-1</strain>
    </source>
</reference>
<accession>Q2YUI8</accession>
<proteinExistence type="inferred from homology"/>
<protein>
    <recommendedName>
        <fullName evidence="1">Serine-protein kinase RsbW</fullName>
        <ecNumber evidence="1">2.7.11.1</ecNumber>
    </recommendedName>
    <alternativeName>
        <fullName evidence="1">Anti-sigma-B factor</fullName>
    </alternativeName>
    <alternativeName>
        <fullName evidence="1">Sigma-B negative effector RsbW</fullName>
    </alternativeName>
</protein>
<organism>
    <name type="scientific">Staphylococcus aureus (strain bovine RF122 / ET3-1)</name>
    <dbReference type="NCBI Taxonomy" id="273036"/>
    <lineage>
        <taxon>Bacteria</taxon>
        <taxon>Bacillati</taxon>
        <taxon>Bacillota</taxon>
        <taxon>Bacilli</taxon>
        <taxon>Bacillales</taxon>
        <taxon>Staphylococcaceae</taxon>
        <taxon>Staphylococcus</taxon>
    </lineage>
</organism>
<comment type="function">
    <text evidence="1">Negative regulator of sigma-B activity. Phosphorylates and inactivates its specific antagonist protein, RsbV. Upon phosphorylation of RsbV, RsbW is released and binds to sigma-B, thereby blocking its ability to form an RNA polymerase holoenzyme (E-sigma-B).</text>
</comment>
<comment type="catalytic activity">
    <reaction evidence="1">
        <text>L-seryl-[protein] + ATP = O-phospho-L-seryl-[protein] + ADP + H(+)</text>
        <dbReference type="Rhea" id="RHEA:17989"/>
        <dbReference type="Rhea" id="RHEA-COMP:9863"/>
        <dbReference type="Rhea" id="RHEA-COMP:11604"/>
        <dbReference type="ChEBI" id="CHEBI:15378"/>
        <dbReference type="ChEBI" id="CHEBI:29999"/>
        <dbReference type="ChEBI" id="CHEBI:30616"/>
        <dbReference type="ChEBI" id="CHEBI:83421"/>
        <dbReference type="ChEBI" id="CHEBI:456216"/>
        <dbReference type="EC" id="2.7.11.1"/>
    </reaction>
</comment>
<comment type="catalytic activity">
    <reaction evidence="1">
        <text>L-threonyl-[protein] + ATP = O-phospho-L-threonyl-[protein] + ADP + H(+)</text>
        <dbReference type="Rhea" id="RHEA:46608"/>
        <dbReference type="Rhea" id="RHEA-COMP:11060"/>
        <dbReference type="Rhea" id="RHEA-COMP:11605"/>
        <dbReference type="ChEBI" id="CHEBI:15378"/>
        <dbReference type="ChEBI" id="CHEBI:30013"/>
        <dbReference type="ChEBI" id="CHEBI:30616"/>
        <dbReference type="ChEBI" id="CHEBI:61977"/>
        <dbReference type="ChEBI" id="CHEBI:456216"/>
        <dbReference type="EC" id="2.7.11.1"/>
    </reaction>
</comment>
<comment type="similarity">
    <text evidence="1">Belongs to the anti-sigma-factor family.</text>
</comment>
<evidence type="ECO:0000255" key="1">
    <source>
        <dbReference type="HAMAP-Rule" id="MF_00638"/>
    </source>
</evidence>